<proteinExistence type="inferred from homology"/>
<reference key="1">
    <citation type="journal article" date="1999" name="Nature">
        <title>Evidence for lateral gene transfer between Archaea and Bacteria from genome sequence of Thermotoga maritima.</title>
        <authorList>
            <person name="Nelson K.E."/>
            <person name="Clayton R.A."/>
            <person name="Gill S.R."/>
            <person name="Gwinn M.L."/>
            <person name="Dodson R.J."/>
            <person name="Haft D.H."/>
            <person name="Hickey E.K."/>
            <person name="Peterson J.D."/>
            <person name="Nelson W.C."/>
            <person name="Ketchum K.A."/>
            <person name="McDonald L.A."/>
            <person name="Utterback T.R."/>
            <person name="Malek J.A."/>
            <person name="Linher K.D."/>
            <person name="Garrett M.M."/>
            <person name="Stewart A.M."/>
            <person name="Cotton M.D."/>
            <person name="Pratt M.S."/>
            <person name="Phillips C.A."/>
            <person name="Richardson D.L."/>
            <person name="Heidelberg J.F."/>
            <person name="Sutton G.G."/>
            <person name="Fleischmann R.D."/>
            <person name="Eisen J.A."/>
            <person name="White O."/>
            <person name="Salzberg S.L."/>
            <person name="Smith H.O."/>
            <person name="Venter J.C."/>
            <person name="Fraser C.M."/>
        </authorList>
    </citation>
    <scope>NUCLEOTIDE SEQUENCE [LARGE SCALE GENOMIC DNA]</scope>
    <source>
        <strain>ATCC 43589 / DSM 3109 / JCM 10099 / NBRC 100826 / MSB8</strain>
    </source>
</reference>
<organism>
    <name type="scientific">Thermotoga maritima (strain ATCC 43589 / DSM 3109 / JCM 10099 / NBRC 100826 / MSB8)</name>
    <dbReference type="NCBI Taxonomy" id="243274"/>
    <lineage>
        <taxon>Bacteria</taxon>
        <taxon>Thermotogati</taxon>
        <taxon>Thermotogota</taxon>
        <taxon>Thermotogae</taxon>
        <taxon>Thermotogales</taxon>
        <taxon>Thermotogaceae</taxon>
        <taxon>Thermotoga</taxon>
    </lineage>
</organism>
<gene>
    <name evidence="1" type="primary">rpsP</name>
    <name type="ordered locus">TM_1566</name>
</gene>
<comment type="similarity">
    <text evidence="1">Belongs to the bacterial ribosomal protein bS16 family.</text>
</comment>
<keyword id="KW-1185">Reference proteome</keyword>
<keyword id="KW-0687">Ribonucleoprotein</keyword>
<keyword id="KW-0689">Ribosomal protein</keyword>
<feature type="chain" id="PRO_0000167267" description="Small ribosomal subunit protein bS16">
    <location>
        <begin position="1"/>
        <end position="95"/>
    </location>
</feature>
<dbReference type="EMBL" id="AE000512">
    <property type="protein sequence ID" value="AAD36633.1"/>
    <property type="molecule type" value="Genomic_DNA"/>
</dbReference>
<dbReference type="PIR" id="G72236">
    <property type="entry name" value="G72236"/>
</dbReference>
<dbReference type="RefSeq" id="NP_229366.1">
    <property type="nucleotide sequence ID" value="NC_000853.1"/>
</dbReference>
<dbReference type="RefSeq" id="WP_004081979.1">
    <property type="nucleotide sequence ID" value="NZ_CP011107.1"/>
</dbReference>
<dbReference type="SMR" id="Q9X1Q2"/>
<dbReference type="FunCoup" id="Q9X1Q2">
    <property type="interactions" value="385"/>
</dbReference>
<dbReference type="STRING" id="243274.TM_1566"/>
<dbReference type="PaxDb" id="243274-THEMA_06450"/>
<dbReference type="EnsemblBacteria" id="AAD36633">
    <property type="protein sequence ID" value="AAD36633"/>
    <property type="gene ID" value="TM_1566"/>
</dbReference>
<dbReference type="KEGG" id="tma:TM1566"/>
<dbReference type="KEGG" id="tmi:THEMA_06450"/>
<dbReference type="KEGG" id="tmm:Tmari_1574"/>
<dbReference type="KEGG" id="tmw:THMA_1601"/>
<dbReference type="eggNOG" id="COG0228">
    <property type="taxonomic scope" value="Bacteria"/>
</dbReference>
<dbReference type="InParanoid" id="Q9X1Q2"/>
<dbReference type="OrthoDB" id="9807878at2"/>
<dbReference type="Proteomes" id="UP000008183">
    <property type="component" value="Chromosome"/>
</dbReference>
<dbReference type="GO" id="GO:0005737">
    <property type="term" value="C:cytoplasm"/>
    <property type="evidence" value="ECO:0007669"/>
    <property type="project" value="UniProtKB-ARBA"/>
</dbReference>
<dbReference type="GO" id="GO:0015935">
    <property type="term" value="C:small ribosomal subunit"/>
    <property type="evidence" value="ECO:0000318"/>
    <property type="project" value="GO_Central"/>
</dbReference>
<dbReference type="GO" id="GO:0003735">
    <property type="term" value="F:structural constituent of ribosome"/>
    <property type="evidence" value="ECO:0000318"/>
    <property type="project" value="GO_Central"/>
</dbReference>
<dbReference type="GO" id="GO:0006412">
    <property type="term" value="P:translation"/>
    <property type="evidence" value="ECO:0007669"/>
    <property type="project" value="UniProtKB-UniRule"/>
</dbReference>
<dbReference type="FunFam" id="3.30.1320.10:FF:000005">
    <property type="entry name" value="30S ribosomal protein S16"/>
    <property type="match status" value="1"/>
</dbReference>
<dbReference type="Gene3D" id="3.30.1320.10">
    <property type="match status" value="1"/>
</dbReference>
<dbReference type="HAMAP" id="MF_00385">
    <property type="entry name" value="Ribosomal_bS16"/>
    <property type="match status" value="1"/>
</dbReference>
<dbReference type="InterPro" id="IPR000307">
    <property type="entry name" value="Ribosomal_bS16"/>
</dbReference>
<dbReference type="InterPro" id="IPR020592">
    <property type="entry name" value="Ribosomal_bS16_CS"/>
</dbReference>
<dbReference type="InterPro" id="IPR023803">
    <property type="entry name" value="Ribosomal_bS16_dom_sf"/>
</dbReference>
<dbReference type="NCBIfam" id="TIGR00002">
    <property type="entry name" value="S16"/>
    <property type="match status" value="1"/>
</dbReference>
<dbReference type="PANTHER" id="PTHR12919">
    <property type="entry name" value="30S RIBOSOMAL PROTEIN S16"/>
    <property type="match status" value="1"/>
</dbReference>
<dbReference type="PANTHER" id="PTHR12919:SF20">
    <property type="entry name" value="SMALL RIBOSOMAL SUBUNIT PROTEIN BS16M"/>
    <property type="match status" value="1"/>
</dbReference>
<dbReference type="Pfam" id="PF00886">
    <property type="entry name" value="Ribosomal_S16"/>
    <property type="match status" value="1"/>
</dbReference>
<dbReference type="SUPFAM" id="SSF54565">
    <property type="entry name" value="Ribosomal protein S16"/>
    <property type="match status" value="1"/>
</dbReference>
<dbReference type="PROSITE" id="PS00732">
    <property type="entry name" value="RIBOSOMAL_S16"/>
    <property type="match status" value="1"/>
</dbReference>
<name>RS16_THEMA</name>
<evidence type="ECO:0000255" key="1">
    <source>
        <dbReference type="HAMAP-Rule" id="MF_00385"/>
    </source>
</evidence>
<evidence type="ECO:0000305" key="2"/>
<protein>
    <recommendedName>
        <fullName evidence="1">Small ribosomal subunit protein bS16</fullName>
    </recommendedName>
    <alternativeName>
        <fullName evidence="2">30S ribosomal protein S16</fullName>
    </alternativeName>
</protein>
<sequence>MVRIRLTRMGKRHQPFYRIVVVDSRKRRDGAYIESLGYYNPLKEGEIKIDVERAVEWILKGAQPSDTVRDIFRKFGVMKRVHEIKYGKKEEATAE</sequence>
<accession>Q9X1Q2</accession>